<protein>
    <recommendedName>
        <fullName>Flagellar transcriptional regulator FtcR</fullName>
    </recommendedName>
</protein>
<evidence type="ECO:0000250" key="1"/>
<evidence type="ECO:0000255" key="2">
    <source>
        <dbReference type="PROSITE-ProRule" id="PRU00169"/>
    </source>
</evidence>
<evidence type="ECO:0000255" key="3">
    <source>
        <dbReference type="PROSITE-ProRule" id="PRU01091"/>
    </source>
</evidence>
<evidence type="ECO:0000305" key="4"/>
<name>FTCR_BRUAB</name>
<comment type="function">
    <text evidence="1">Required for transcription of flagellar genes.</text>
</comment>
<comment type="miscellaneous">
    <text>There is no cognate histidine kinase partner identified so far for FtcR.</text>
</comment>
<comment type="caution">
    <text evidence="4">Lacks the conserved Asp residue in position 50 usually required for phosphorylation.</text>
</comment>
<accession>Q576I4</accession>
<dbReference type="EMBL" id="AE017224">
    <property type="protein sequence ID" value="AAX76450.1"/>
    <property type="molecule type" value="Genomic_DNA"/>
</dbReference>
<dbReference type="RefSeq" id="WP_002966643.1">
    <property type="nucleotide sequence ID" value="NC_006933.1"/>
</dbReference>
<dbReference type="SMR" id="Q576I4"/>
<dbReference type="EnsemblBacteria" id="AAX76450">
    <property type="protein sequence ID" value="AAX76450"/>
    <property type="gene ID" value="BruAb2_1077"/>
</dbReference>
<dbReference type="KEGG" id="bmb:BruAb2_1077"/>
<dbReference type="HOGENOM" id="CLU_1064703_0_0_5"/>
<dbReference type="PRO" id="PR:Q576I4"/>
<dbReference type="Proteomes" id="UP000000540">
    <property type="component" value="Chromosome II"/>
</dbReference>
<dbReference type="GO" id="GO:0005829">
    <property type="term" value="C:cytosol"/>
    <property type="evidence" value="ECO:0007669"/>
    <property type="project" value="TreeGrafter"/>
</dbReference>
<dbReference type="GO" id="GO:0032993">
    <property type="term" value="C:protein-DNA complex"/>
    <property type="evidence" value="ECO:0007669"/>
    <property type="project" value="TreeGrafter"/>
</dbReference>
<dbReference type="GO" id="GO:0000156">
    <property type="term" value="F:phosphorelay response regulator activity"/>
    <property type="evidence" value="ECO:0007669"/>
    <property type="project" value="TreeGrafter"/>
</dbReference>
<dbReference type="GO" id="GO:0000976">
    <property type="term" value="F:transcription cis-regulatory region binding"/>
    <property type="evidence" value="ECO:0007669"/>
    <property type="project" value="TreeGrafter"/>
</dbReference>
<dbReference type="GO" id="GO:0006355">
    <property type="term" value="P:regulation of DNA-templated transcription"/>
    <property type="evidence" value="ECO:0007669"/>
    <property type="project" value="InterPro"/>
</dbReference>
<dbReference type="CDD" id="cd00383">
    <property type="entry name" value="trans_reg_C"/>
    <property type="match status" value="1"/>
</dbReference>
<dbReference type="Gene3D" id="3.40.50.2300">
    <property type="match status" value="1"/>
</dbReference>
<dbReference type="Gene3D" id="1.10.10.10">
    <property type="entry name" value="Winged helix-like DNA-binding domain superfamily/Winged helix DNA-binding domain"/>
    <property type="match status" value="1"/>
</dbReference>
<dbReference type="InterPro" id="IPR011006">
    <property type="entry name" value="CheY-like_superfamily"/>
</dbReference>
<dbReference type="InterPro" id="IPR001867">
    <property type="entry name" value="OmpR/PhoB-type_DNA-bd"/>
</dbReference>
<dbReference type="InterPro" id="IPR016032">
    <property type="entry name" value="Sig_transdc_resp-reg_C-effctor"/>
</dbReference>
<dbReference type="InterPro" id="IPR001789">
    <property type="entry name" value="Sig_transdc_resp-reg_receiver"/>
</dbReference>
<dbReference type="InterPro" id="IPR039420">
    <property type="entry name" value="WalR-like"/>
</dbReference>
<dbReference type="InterPro" id="IPR036388">
    <property type="entry name" value="WH-like_DNA-bd_sf"/>
</dbReference>
<dbReference type="PANTHER" id="PTHR48111">
    <property type="entry name" value="REGULATOR OF RPOS"/>
    <property type="match status" value="1"/>
</dbReference>
<dbReference type="PANTHER" id="PTHR48111:SF67">
    <property type="entry name" value="TRANSCRIPTIONAL REGULATORY PROTEIN TCTD"/>
    <property type="match status" value="1"/>
</dbReference>
<dbReference type="Pfam" id="PF00486">
    <property type="entry name" value="Trans_reg_C"/>
    <property type="match status" value="1"/>
</dbReference>
<dbReference type="SMART" id="SM00862">
    <property type="entry name" value="Trans_reg_C"/>
    <property type="match status" value="1"/>
</dbReference>
<dbReference type="SUPFAM" id="SSF46894">
    <property type="entry name" value="C-terminal effector domain of the bipartite response regulators"/>
    <property type="match status" value="1"/>
</dbReference>
<dbReference type="SUPFAM" id="SSF52172">
    <property type="entry name" value="CheY-like"/>
    <property type="match status" value="1"/>
</dbReference>
<dbReference type="PROSITE" id="PS51755">
    <property type="entry name" value="OMPR_PHOB"/>
    <property type="match status" value="1"/>
</dbReference>
<dbReference type="PROSITE" id="PS50110">
    <property type="entry name" value="RESPONSE_REGULATORY"/>
    <property type="match status" value="1"/>
</dbReference>
<reference key="1">
    <citation type="journal article" date="2005" name="J. Bacteriol.">
        <title>Completion of the genome sequence of Brucella abortus and comparison to the highly similar genomes of Brucella melitensis and Brucella suis.</title>
        <authorList>
            <person name="Halling S.M."/>
            <person name="Peterson-Burch B.D."/>
            <person name="Bricker B.J."/>
            <person name="Zuerner R.L."/>
            <person name="Qing Z."/>
            <person name="Li L.-L."/>
            <person name="Kapur V."/>
            <person name="Alt D.P."/>
            <person name="Olsen S.C."/>
        </authorList>
    </citation>
    <scope>NUCLEOTIDE SEQUENCE [LARGE SCALE GENOMIC DNA]</scope>
    <source>
        <strain>9-941</strain>
    </source>
</reference>
<organism>
    <name type="scientific">Brucella abortus biovar 1 (strain 9-941)</name>
    <dbReference type="NCBI Taxonomy" id="262698"/>
    <lineage>
        <taxon>Bacteria</taxon>
        <taxon>Pseudomonadati</taxon>
        <taxon>Pseudomonadota</taxon>
        <taxon>Alphaproteobacteria</taxon>
        <taxon>Hyphomicrobiales</taxon>
        <taxon>Brucellaceae</taxon>
        <taxon>Brucella/Ochrobactrum group</taxon>
        <taxon>Brucella</taxon>
    </lineage>
</organism>
<proteinExistence type="inferred from homology"/>
<feature type="chain" id="PRO_0000319614" description="Flagellar transcriptional regulator FtcR">
    <location>
        <begin position="1"/>
        <end position="227"/>
    </location>
</feature>
<feature type="domain" description="Response regulatory" evidence="2">
    <location>
        <begin position="1"/>
        <end position="116"/>
    </location>
</feature>
<feature type="DNA-binding region" description="OmpR/PhoB-type" evidence="3">
    <location>
        <begin position="127"/>
        <end position="226"/>
    </location>
</feature>
<gene>
    <name type="primary">ftcR</name>
    <name type="ordered locus">BruAb2_1077</name>
</gene>
<sequence length="227" mass="25738">MIVVVDDRDMVTEGYSSWFGREGITTTGFTPTDFDEWVESVPEQDIMAIEAFLIGECADQHRLPARIRERCKAPVIAVNDRPSLEHTLELFQSGVDDVVRKPVHVREILARINAIRRRAGASATSGADGTQLGPIRVFSDGRDPQINGIDFPLPRRERRILEYLIANRGRRLNKVQIFSAIYGIFDSEVEENVVESHISKLRKKLRGQLGFDPIDSKRFLGYCINIE</sequence>
<keyword id="KW-0238">DNA-binding</keyword>
<keyword id="KW-0804">Transcription</keyword>
<keyword id="KW-0805">Transcription regulation</keyword>